<keyword id="KW-0418">Kinase</keyword>
<keyword id="KW-0547">Nucleotide-binding</keyword>
<keyword id="KW-0723">Serine/threonine-protein kinase</keyword>
<keyword id="KW-0808">Transferase</keyword>
<name>PDRP_ANAPZ</name>
<protein>
    <recommendedName>
        <fullName evidence="1">Putative pyruvate, phosphate dikinase regulatory protein</fullName>
        <shortName evidence="1">PPDK regulatory protein</shortName>
        <ecNumber evidence="1">2.7.11.32</ecNumber>
        <ecNumber evidence="1">2.7.4.27</ecNumber>
    </recommendedName>
</protein>
<gene>
    <name type="ordered locus">APH_0961</name>
</gene>
<organism>
    <name type="scientific">Anaplasma phagocytophilum (strain HZ)</name>
    <dbReference type="NCBI Taxonomy" id="212042"/>
    <lineage>
        <taxon>Bacteria</taxon>
        <taxon>Pseudomonadati</taxon>
        <taxon>Pseudomonadota</taxon>
        <taxon>Alphaproteobacteria</taxon>
        <taxon>Rickettsiales</taxon>
        <taxon>Anaplasmataceae</taxon>
        <taxon>Anaplasma</taxon>
        <taxon>phagocytophilum group</taxon>
    </lineage>
</organism>
<comment type="function">
    <text evidence="1">Bifunctional serine/threonine kinase and phosphorylase involved in the regulation of the pyruvate, phosphate dikinase (PPDK) by catalyzing its phosphorylation/dephosphorylation.</text>
</comment>
<comment type="catalytic activity">
    <reaction evidence="1">
        <text>N(tele)-phospho-L-histidyl/L-threonyl-[pyruvate, phosphate dikinase] + ADP = N(tele)-phospho-L-histidyl/O-phospho-L-threonyl-[pyruvate, phosphate dikinase] + AMP + H(+)</text>
        <dbReference type="Rhea" id="RHEA:43692"/>
        <dbReference type="Rhea" id="RHEA-COMP:10650"/>
        <dbReference type="Rhea" id="RHEA-COMP:10651"/>
        <dbReference type="ChEBI" id="CHEBI:15378"/>
        <dbReference type="ChEBI" id="CHEBI:30013"/>
        <dbReference type="ChEBI" id="CHEBI:61977"/>
        <dbReference type="ChEBI" id="CHEBI:83586"/>
        <dbReference type="ChEBI" id="CHEBI:456215"/>
        <dbReference type="ChEBI" id="CHEBI:456216"/>
        <dbReference type="EC" id="2.7.11.32"/>
    </reaction>
</comment>
<comment type="catalytic activity">
    <reaction evidence="1">
        <text>N(tele)-phospho-L-histidyl/O-phospho-L-threonyl-[pyruvate, phosphate dikinase] + phosphate + H(+) = N(tele)-phospho-L-histidyl/L-threonyl-[pyruvate, phosphate dikinase] + diphosphate</text>
        <dbReference type="Rhea" id="RHEA:43696"/>
        <dbReference type="Rhea" id="RHEA-COMP:10650"/>
        <dbReference type="Rhea" id="RHEA-COMP:10651"/>
        <dbReference type="ChEBI" id="CHEBI:15378"/>
        <dbReference type="ChEBI" id="CHEBI:30013"/>
        <dbReference type="ChEBI" id="CHEBI:33019"/>
        <dbReference type="ChEBI" id="CHEBI:43474"/>
        <dbReference type="ChEBI" id="CHEBI:61977"/>
        <dbReference type="ChEBI" id="CHEBI:83586"/>
        <dbReference type="EC" id="2.7.4.27"/>
    </reaction>
</comment>
<comment type="similarity">
    <text evidence="1">Belongs to the pyruvate, phosphate/water dikinase regulatory protein family. PDRP subfamily.</text>
</comment>
<sequence>MGEKAILDLHLVSDSTCETVVSVARAAVEHFKSLEVNEFVWSLVGSKSHVDRIISSIDRKRNNLIMYTVLDDDLREYLKKKAEAYNIRCIPILSHIIREISCYLSVAKDPNAHPHRLSDEYFNRIEAINYTIAHDDGQSLWDIDGADIIIVGVSRTSKSPTSIYLAYRGYKVVNIPFVHSITLPIDSAALADKLVVGLTIDIDRLIQIRRNRLISMKNQSNCNYISYEQVEQEISEVNRICMKNQWPLIDVTQKSIEETAATIIQFFNRKNNKIGGDAFC</sequence>
<reference key="1">
    <citation type="journal article" date="2006" name="PLoS Genet.">
        <title>Comparative genomics of emerging human ehrlichiosis agents.</title>
        <authorList>
            <person name="Dunning Hotopp J.C."/>
            <person name="Lin M."/>
            <person name="Madupu R."/>
            <person name="Crabtree J."/>
            <person name="Angiuoli S.V."/>
            <person name="Eisen J.A."/>
            <person name="Seshadri R."/>
            <person name="Ren Q."/>
            <person name="Wu M."/>
            <person name="Utterback T.R."/>
            <person name="Smith S."/>
            <person name="Lewis M."/>
            <person name="Khouri H."/>
            <person name="Zhang C."/>
            <person name="Niu H."/>
            <person name="Lin Q."/>
            <person name="Ohashi N."/>
            <person name="Zhi N."/>
            <person name="Nelson W.C."/>
            <person name="Brinkac L.M."/>
            <person name="Dodson R.J."/>
            <person name="Rosovitz M.J."/>
            <person name="Sundaram J.P."/>
            <person name="Daugherty S.C."/>
            <person name="Davidsen T."/>
            <person name="Durkin A.S."/>
            <person name="Gwinn M.L."/>
            <person name="Haft D.H."/>
            <person name="Selengut J.D."/>
            <person name="Sullivan S.A."/>
            <person name="Zafar N."/>
            <person name="Zhou L."/>
            <person name="Benahmed F."/>
            <person name="Forberger H."/>
            <person name="Halpin R."/>
            <person name="Mulligan S."/>
            <person name="Robinson J."/>
            <person name="White O."/>
            <person name="Rikihisa Y."/>
            <person name="Tettelin H."/>
        </authorList>
    </citation>
    <scope>NUCLEOTIDE SEQUENCE [LARGE SCALE GENOMIC DNA]</scope>
    <source>
        <strain>HZ</strain>
    </source>
</reference>
<proteinExistence type="inferred from homology"/>
<evidence type="ECO:0000255" key="1">
    <source>
        <dbReference type="HAMAP-Rule" id="MF_00921"/>
    </source>
</evidence>
<accession>Q2GJC2</accession>
<feature type="chain" id="PRO_0000316633" description="Putative pyruvate, phosphate dikinase regulatory protein">
    <location>
        <begin position="1"/>
        <end position="280"/>
    </location>
</feature>
<feature type="binding site" evidence="1">
    <location>
        <begin position="152"/>
        <end position="159"/>
    </location>
    <ligand>
        <name>ADP</name>
        <dbReference type="ChEBI" id="CHEBI:456216"/>
    </ligand>
</feature>
<dbReference type="EC" id="2.7.11.32" evidence="1"/>
<dbReference type="EC" id="2.7.4.27" evidence="1"/>
<dbReference type="EMBL" id="CP000235">
    <property type="protein sequence ID" value="ABD43846.1"/>
    <property type="molecule type" value="Genomic_DNA"/>
</dbReference>
<dbReference type="RefSeq" id="WP_011451042.1">
    <property type="nucleotide sequence ID" value="NC_007797.1"/>
</dbReference>
<dbReference type="SMR" id="Q2GJC2"/>
<dbReference type="STRING" id="212042.APH_0961"/>
<dbReference type="PaxDb" id="212042-APH_0961"/>
<dbReference type="EnsemblBacteria" id="ABD43846">
    <property type="protein sequence ID" value="ABD43846"/>
    <property type="gene ID" value="APH_0961"/>
</dbReference>
<dbReference type="KEGG" id="aph:APH_0961"/>
<dbReference type="eggNOG" id="COG1806">
    <property type="taxonomic scope" value="Bacteria"/>
</dbReference>
<dbReference type="HOGENOM" id="CLU_046206_2_0_5"/>
<dbReference type="Proteomes" id="UP000001943">
    <property type="component" value="Chromosome"/>
</dbReference>
<dbReference type="GO" id="GO:0043531">
    <property type="term" value="F:ADP binding"/>
    <property type="evidence" value="ECO:0007669"/>
    <property type="project" value="UniProtKB-UniRule"/>
</dbReference>
<dbReference type="GO" id="GO:0005524">
    <property type="term" value="F:ATP binding"/>
    <property type="evidence" value="ECO:0007669"/>
    <property type="project" value="InterPro"/>
</dbReference>
<dbReference type="GO" id="GO:0016776">
    <property type="term" value="F:phosphotransferase activity, phosphate group as acceptor"/>
    <property type="evidence" value="ECO:0007669"/>
    <property type="project" value="UniProtKB-UniRule"/>
</dbReference>
<dbReference type="GO" id="GO:0004674">
    <property type="term" value="F:protein serine/threonine kinase activity"/>
    <property type="evidence" value="ECO:0007669"/>
    <property type="project" value="UniProtKB-UniRule"/>
</dbReference>
<dbReference type="HAMAP" id="MF_00921">
    <property type="entry name" value="PDRP"/>
    <property type="match status" value="1"/>
</dbReference>
<dbReference type="InterPro" id="IPR005177">
    <property type="entry name" value="Kinase-pyrophosphorylase"/>
</dbReference>
<dbReference type="InterPro" id="IPR026565">
    <property type="entry name" value="PPDK_reg"/>
</dbReference>
<dbReference type="NCBIfam" id="NF003742">
    <property type="entry name" value="PRK05339.1"/>
    <property type="match status" value="1"/>
</dbReference>
<dbReference type="PANTHER" id="PTHR31756">
    <property type="entry name" value="PYRUVATE, PHOSPHATE DIKINASE REGULATORY PROTEIN 1, CHLOROPLASTIC"/>
    <property type="match status" value="1"/>
</dbReference>
<dbReference type="PANTHER" id="PTHR31756:SF3">
    <property type="entry name" value="PYRUVATE, PHOSPHATE DIKINASE REGULATORY PROTEIN 1, CHLOROPLASTIC"/>
    <property type="match status" value="1"/>
</dbReference>
<dbReference type="Pfam" id="PF03618">
    <property type="entry name" value="Kinase-PPPase"/>
    <property type="match status" value="1"/>
</dbReference>